<keyword id="KW-0963">Cytoplasm</keyword>
<keyword id="KW-0275">Fatty acid biosynthesis</keyword>
<keyword id="KW-0276">Fatty acid metabolism</keyword>
<keyword id="KW-0413">Isomerase</keyword>
<keyword id="KW-0444">Lipid biosynthesis</keyword>
<keyword id="KW-0443">Lipid metabolism</keyword>
<keyword id="KW-0456">Lyase</keyword>
<sequence length="177" mass="19465">MQNACTLNKKSSYSYDDLLASGRGELFGKEGPQLPAPTMLMMDRIIEMNEETGAFGKGYIEAELDIKPELPFFGCHFIGDPVMPGCLGLDAMWQLVGFYLGWIGGKGKGRALGVGEVKFTGQILPTAKKVVYRIHMKRVINRKLVMGMADGEVEVDGRVIYTATDLKVGLFQDTSTF</sequence>
<dbReference type="EC" id="4.2.1.59" evidence="1"/>
<dbReference type="EC" id="5.3.3.14" evidence="1"/>
<dbReference type="EMBL" id="CP000672">
    <property type="protein sequence ID" value="ABQ99342.1"/>
    <property type="molecule type" value="Genomic_DNA"/>
</dbReference>
<dbReference type="SMR" id="A5UEY7"/>
<dbReference type="KEGG" id="hiq:CGSHiGG_01265"/>
<dbReference type="HOGENOM" id="CLU_097925_0_0_6"/>
<dbReference type="UniPathway" id="UPA00094"/>
<dbReference type="Proteomes" id="UP000001990">
    <property type="component" value="Chromosome"/>
</dbReference>
<dbReference type="GO" id="GO:0005737">
    <property type="term" value="C:cytoplasm"/>
    <property type="evidence" value="ECO:0007669"/>
    <property type="project" value="UniProtKB-SubCell"/>
</dbReference>
<dbReference type="GO" id="GO:0019171">
    <property type="term" value="F:(3R)-hydroxyacyl-[acyl-carrier-protein] dehydratase activity"/>
    <property type="evidence" value="ECO:0007669"/>
    <property type="project" value="UniProtKB-UniRule"/>
</dbReference>
<dbReference type="GO" id="GO:0034017">
    <property type="term" value="F:trans-2-decenoyl-acyl-carrier-protein isomerase activity"/>
    <property type="evidence" value="ECO:0007669"/>
    <property type="project" value="UniProtKB-UniRule"/>
</dbReference>
<dbReference type="GO" id="GO:0006636">
    <property type="term" value="P:unsaturated fatty acid biosynthetic process"/>
    <property type="evidence" value="ECO:0007669"/>
    <property type="project" value="UniProtKB-UniRule"/>
</dbReference>
<dbReference type="CDD" id="cd01287">
    <property type="entry name" value="FabA"/>
    <property type="match status" value="1"/>
</dbReference>
<dbReference type="FunFam" id="3.10.129.10:FF:000003">
    <property type="entry name" value="3-hydroxydecanoyl-[acyl-carrier-protein] dehydratase"/>
    <property type="match status" value="1"/>
</dbReference>
<dbReference type="Gene3D" id="3.10.129.10">
    <property type="entry name" value="Hotdog Thioesterase"/>
    <property type="match status" value="1"/>
</dbReference>
<dbReference type="HAMAP" id="MF_00405">
    <property type="entry name" value="FabA"/>
    <property type="match status" value="1"/>
</dbReference>
<dbReference type="InterPro" id="IPR010083">
    <property type="entry name" value="FabA"/>
</dbReference>
<dbReference type="InterPro" id="IPR013114">
    <property type="entry name" value="FabA_FabZ"/>
</dbReference>
<dbReference type="InterPro" id="IPR029069">
    <property type="entry name" value="HotDog_dom_sf"/>
</dbReference>
<dbReference type="NCBIfam" id="TIGR01749">
    <property type="entry name" value="fabA"/>
    <property type="match status" value="1"/>
</dbReference>
<dbReference type="NCBIfam" id="NF003509">
    <property type="entry name" value="PRK05174.1"/>
    <property type="match status" value="1"/>
</dbReference>
<dbReference type="PANTHER" id="PTHR30272">
    <property type="entry name" value="3-HYDROXYACYL-[ACYL-CARRIER-PROTEIN] DEHYDRATASE"/>
    <property type="match status" value="1"/>
</dbReference>
<dbReference type="PANTHER" id="PTHR30272:SF8">
    <property type="entry name" value="3-HYDROXYDECANOYL-[ACYL-CARRIER-PROTEIN] DEHYDRATASE"/>
    <property type="match status" value="1"/>
</dbReference>
<dbReference type="Pfam" id="PF07977">
    <property type="entry name" value="FabA"/>
    <property type="match status" value="1"/>
</dbReference>
<dbReference type="SUPFAM" id="SSF54637">
    <property type="entry name" value="Thioesterase/thiol ester dehydrase-isomerase"/>
    <property type="match status" value="1"/>
</dbReference>
<organism>
    <name type="scientific">Haemophilus influenzae (strain PittGG)</name>
    <dbReference type="NCBI Taxonomy" id="374931"/>
    <lineage>
        <taxon>Bacteria</taxon>
        <taxon>Pseudomonadati</taxon>
        <taxon>Pseudomonadota</taxon>
        <taxon>Gammaproteobacteria</taxon>
        <taxon>Pasteurellales</taxon>
        <taxon>Pasteurellaceae</taxon>
        <taxon>Haemophilus</taxon>
    </lineage>
</organism>
<evidence type="ECO:0000255" key="1">
    <source>
        <dbReference type="HAMAP-Rule" id="MF_00405"/>
    </source>
</evidence>
<gene>
    <name evidence="1" type="primary">fabA</name>
    <name type="ordered locus">CGSHiGG_01265</name>
</gene>
<feature type="chain" id="PRO_1000049825" description="3-hydroxydecanoyl-[acyl-carrier-protein] dehydratase">
    <location>
        <begin position="1"/>
        <end position="177"/>
    </location>
</feature>
<feature type="active site" evidence="1">
    <location>
        <position position="76"/>
    </location>
</feature>
<reference key="1">
    <citation type="journal article" date="2007" name="Genome Biol.">
        <title>Characterization and modeling of the Haemophilus influenzae core and supragenomes based on the complete genomic sequences of Rd and 12 clinical nontypeable strains.</title>
        <authorList>
            <person name="Hogg J.S."/>
            <person name="Hu F.Z."/>
            <person name="Janto B."/>
            <person name="Boissy R."/>
            <person name="Hayes J."/>
            <person name="Keefe R."/>
            <person name="Post J.C."/>
            <person name="Ehrlich G.D."/>
        </authorList>
    </citation>
    <scope>NUCLEOTIDE SEQUENCE [LARGE SCALE GENOMIC DNA]</scope>
    <source>
        <strain>PittGG</strain>
    </source>
</reference>
<comment type="function">
    <text evidence="1">Necessary for the introduction of cis unsaturation into fatty acids. Catalyzes the dehydration of (3R)-3-hydroxydecanoyl-ACP to E-(2)-decenoyl-ACP and then its isomerization to Z-(3)-decenoyl-ACP. Can catalyze the dehydratase reaction for beta-hydroxyacyl-ACPs with saturated chain lengths up to 16:0, being most active on intermediate chain length.</text>
</comment>
<comment type="catalytic activity">
    <reaction evidence="1">
        <text>a (3R)-hydroxyacyl-[ACP] = a (2E)-enoyl-[ACP] + H2O</text>
        <dbReference type="Rhea" id="RHEA:13097"/>
        <dbReference type="Rhea" id="RHEA-COMP:9925"/>
        <dbReference type="Rhea" id="RHEA-COMP:9945"/>
        <dbReference type="ChEBI" id="CHEBI:15377"/>
        <dbReference type="ChEBI" id="CHEBI:78784"/>
        <dbReference type="ChEBI" id="CHEBI:78827"/>
        <dbReference type="EC" id="4.2.1.59"/>
    </reaction>
</comment>
<comment type="catalytic activity">
    <reaction evidence="1">
        <text>(3R)-hydroxydecanoyl-[ACP] = (2E)-decenoyl-[ACP] + H2O</text>
        <dbReference type="Rhea" id="RHEA:41860"/>
        <dbReference type="Rhea" id="RHEA-COMP:9638"/>
        <dbReference type="Rhea" id="RHEA-COMP:9639"/>
        <dbReference type="ChEBI" id="CHEBI:15377"/>
        <dbReference type="ChEBI" id="CHEBI:78466"/>
        <dbReference type="ChEBI" id="CHEBI:78467"/>
    </reaction>
</comment>
<comment type="catalytic activity">
    <reaction evidence="1">
        <text>(2E)-decenoyl-[ACP] = (3Z)-decenoyl-[ACP]</text>
        <dbReference type="Rhea" id="RHEA:23568"/>
        <dbReference type="Rhea" id="RHEA-COMP:9639"/>
        <dbReference type="Rhea" id="RHEA-COMP:9927"/>
        <dbReference type="ChEBI" id="CHEBI:78467"/>
        <dbReference type="ChEBI" id="CHEBI:78798"/>
        <dbReference type="EC" id="5.3.3.14"/>
    </reaction>
</comment>
<comment type="pathway">
    <text evidence="1">Lipid metabolism; fatty acid biosynthesis.</text>
</comment>
<comment type="subunit">
    <text evidence="1">Homodimer.</text>
</comment>
<comment type="subcellular location">
    <subcellularLocation>
        <location evidence="1">Cytoplasm</location>
    </subcellularLocation>
</comment>
<comment type="similarity">
    <text evidence="1">Belongs to the thioester dehydratase family. FabA subfamily.</text>
</comment>
<name>FABA_HAEIG</name>
<proteinExistence type="inferred from homology"/>
<accession>A5UEY7</accession>
<protein>
    <recommendedName>
        <fullName evidence="1">3-hydroxydecanoyl-[acyl-carrier-protein] dehydratase</fullName>
        <ecNumber evidence="1">4.2.1.59</ecNumber>
    </recommendedName>
    <alternativeName>
        <fullName evidence="1">3-hydroxyacyl-[acyl-carrier-protein] dehydratase FabA</fullName>
    </alternativeName>
    <alternativeName>
        <fullName evidence="1">Beta-hydroxydecanoyl thioester dehydrase</fullName>
    </alternativeName>
    <alternativeName>
        <fullName evidence="1">Trans-2-decenoyl-[acyl-carrier-protein] isomerase</fullName>
        <ecNumber evidence="1">5.3.3.14</ecNumber>
    </alternativeName>
</protein>